<organism>
    <name type="scientific">Yersinia pestis (strain Pestoides F)</name>
    <dbReference type="NCBI Taxonomy" id="386656"/>
    <lineage>
        <taxon>Bacteria</taxon>
        <taxon>Pseudomonadati</taxon>
        <taxon>Pseudomonadota</taxon>
        <taxon>Gammaproteobacteria</taxon>
        <taxon>Enterobacterales</taxon>
        <taxon>Yersiniaceae</taxon>
        <taxon>Yersinia</taxon>
    </lineage>
</organism>
<evidence type="ECO:0000255" key="1">
    <source>
        <dbReference type="HAMAP-Rule" id="MF_00380"/>
    </source>
</evidence>
<evidence type="ECO:0000256" key="2">
    <source>
        <dbReference type="SAM" id="MobiDB-lite"/>
    </source>
</evidence>
<name>IHFA_YERPP</name>
<reference key="1">
    <citation type="submission" date="2007-02" db="EMBL/GenBank/DDBJ databases">
        <title>Complete sequence of chromosome of Yersinia pestis Pestoides F.</title>
        <authorList>
            <consortium name="US DOE Joint Genome Institute"/>
            <person name="Copeland A."/>
            <person name="Lucas S."/>
            <person name="Lapidus A."/>
            <person name="Barry K."/>
            <person name="Detter J.C."/>
            <person name="Glavina del Rio T."/>
            <person name="Hammon N."/>
            <person name="Israni S."/>
            <person name="Dalin E."/>
            <person name="Tice H."/>
            <person name="Pitluck S."/>
            <person name="Di Bartolo G."/>
            <person name="Chain P."/>
            <person name="Malfatti S."/>
            <person name="Shin M."/>
            <person name="Vergez L."/>
            <person name="Schmutz J."/>
            <person name="Larimer F."/>
            <person name="Land M."/>
            <person name="Hauser L."/>
            <person name="Worsham P."/>
            <person name="Chu M."/>
            <person name="Bearden S."/>
            <person name="Garcia E."/>
            <person name="Richardson P."/>
        </authorList>
    </citation>
    <scope>NUCLEOTIDE SEQUENCE [LARGE SCALE GENOMIC DNA]</scope>
    <source>
        <strain>Pestoides F</strain>
    </source>
</reference>
<comment type="function">
    <text evidence="1">This protein is one of the two subunits of integration host factor, a specific DNA-binding protein that functions in genetic recombination as well as in transcriptional and translational control.</text>
</comment>
<comment type="subunit">
    <text evidence="1">Heterodimer of an alpha and a beta chain.</text>
</comment>
<comment type="similarity">
    <text evidence="1">Belongs to the bacterial histone-like protein family.</text>
</comment>
<proteinExistence type="inferred from homology"/>
<accession>A4TIL7</accession>
<sequence length="98" mass="11186">MALTKAEMSEHLFEKLGLSKRDAKDLVELFFEEVRRALENGEQVKLSGFGNFDLRDKNQRPGRNPKTGEDIPITARRVVTFRPGQKLKSRVESATPKE</sequence>
<gene>
    <name evidence="1" type="primary">ihfA</name>
    <name evidence="1" type="synonym">himA</name>
    <name type="ordered locus">YPDSF_0723</name>
</gene>
<dbReference type="EMBL" id="CP000668">
    <property type="protein sequence ID" value="ABP39129.1"/>
    <property type="molecule type" value="Genomic_DNA"/>
</dbReference>
<dbReference type="RefSeq" id="WP_002211830.1">
    <property type="nucleotide sequence ID" value="NZ_CP009715.1"/>
</dbReference>
<dbReference type="SMR" id="A4TIL7"/>
<dbReference type="GeneID" id="97456078"/>
<dbReference type="KEGG" id="ypp:YPDSF_0723"/>
<dbReference type="PATRIC" id="fig|386656.14.peg.3146"/>
<dbReference type="GO" id="GO:0005829">
    <property type="term" value="C:cytosol"/>
    <property type="evidence" value="ECO:0007669"/>
    <property type="project" value="TreeGrafter"/>
</dbReference>
<dbReference type="GO" id="GO:0003677">
    <property type="term" value="F:DNA binding"/>
    <property type="evidence" value="ECO:0007669"/>
    <property type="project" value="UniProtKB-UniRule"/>
</dbReference>
<dbReference type="GO" id="GO:0030527">
    <property type="term" value="F:structural constituent of chromatin"/>
    <property type="evidence" value="ECO:0007669"/>
    <property type="project" value="InterPro"/>
</dbReference>
<dbReference type="GO" id="GO:0006310">
    <property type="term" value="P:DNA recombination"/>
    <property type="evidence" value="ECO:0007669"/>
    <property type="project" value="UniProtKB-UniRule"/>
</dbReference>
<dbReference type="GO" id="GO:0009893">
    <property type="term" value="P:positive regulation of metabolic process"/>
    <property type="evidence" value="ECO:0007669"/>
    <property type="project" value="UniProtKB-ARBA"/>
</dbReference>
<dbReference type="GO" id="GO:0006355">
    <property type="term" value="P:regulation of DNA-templated transcription"/>
    <property type="evidence" value="ECO:0007669"/>
    <property type="project" value="UniProtKB-UniRule"/>
</dbReference>
<dbReference type="GO" id="GO:0006417">
    <property type="term" value="P:regulation of translation"/>
    <property type="evidence" value="ECO:0007669"/>
    <property type="project" value="UniProtKB-UniRule"/>
</dbReference>
<dbReference type="CDD" id="cd13835">
    <property type="entry name" value="IHF_A"/>
    <property type="match status" value="1"/>
</dbReference>
<dbReference type="FunFam" id="4.10.520.10:FF:000002">
    <property type="entry name" value="Integration host factor subunit alpha"/>
    <property type="match status" value="1"/>
</dbReference>
<dbReference type="Gene3D" id="4.10.520.10">
    <property type="entry name" value="IHF-like DNA-binding proteins"/>
    <property type="match status" value="1"/>
</dbReference>
<dbReference type="HAMAP" id="MF_00380">
    <property type="entry name" value="IHF_alpha"/>
    <property type="match status" value="1"/>
</dbReference>
<dbReference type="InterPro" id="IPR000119">
    <property type="entry name" value="Hist_DNA-bd"/>
</dbReference>
<dbReference type="InterPro" id="IPR020816">
    <property type="entry name" value="Histone-like_DNA-bd_CS"/>
</dbReference>
<dbReference type="InterPro" id="IPR010992">
    <property type="entry name" value="IHF-like_DNA-bd_dom_sf"/>
</dbReference>
<dbReference type="InterPro" id="IPR005684">
    <property type="entry name" value="IHF_alpha"/>
</dbReference>
<dbReference type="NCBIfam" id="TIGR00987">
    <property type="entry name" value="himA"/>
    <property type="match status" value="1"/>
</dbReference>
<dbReference type="NCBIfam" id="NF001401">
    <property type="entry name" value="PRK00285.1"/>
    <property type="match status" value="1"/>
</dbReference>
<dbReference type="PANTHER" id="PTHR33175">
    <property type="entry name" value="DNA-BINDING PROTEIN HU"/>
    <property type="match status" value="1"/>
</dbReference>
<dbReference type="PANTHER" id="PTHR33175:SF2">
    <property type="entry name" value="INTEGRATION HOST FACTOR SUBUNIT ALPHA"/>
    <property type="match status" value="1"/>
</dbReference>
<dbReference type="Pfam" id="PF00216">
    <property type="entry name" value="Bac_DNA_binding"/>
    <property type="match status" value="1"/>
</dbReference>
<dbReference type="PRINTS" id="PR01727">
    <property type="entry name" value="DNABINDINGHU"/>
</dbReference>
<dbReference type="SMART" id="SM00411">
    <property type="entry name" value="BHL"/>
    <property type="match status" value="1"/>
</dbReference>
<dbReference type="SUPFAM" id="SSF47729">
    <property type="entry name" value="IHF-like DNA-binding proteins"/>
    <property type="match status" value="1"/>
</dbReference>
<dbReference type="PROSITE" id="PS00045">
    <property type="entry name" value="HISTONE_LIKE"/>
    <property type="match status" value="1"/>
</dbReference>
<feature type="chain" id="PRO_1000060580" description="Integration host factor subunit alpha">
    <location>
        <begin position="1"/>
        <end position="98"/>
    </location>
</feature>
<feature type="region of interest" description="Disordered" evidence="2">
    <location>
        <begin position="49"/>
        <end position="70"/>
    </location>
</feature>
<keyword id="KW-0233">DNA recombination</keyword>
<keyword id="KW-0238">DNA-binding</keyword>
<keyword id="KW-0804">Transcription</keyword>
<keyword id="KW-0805">Transcription regulation</keyword>
<keyword id="KW-0810">Translation regulation</keyword>
<protein>
    <recommendedName>
        <fullName evidence="1">Integration host factor subunit alpha</fullName>
        <shortName evidence="1">IHF-alpha</shortName>
    </recommendedName>
</protein>